<keyword id="KW-0456">Lyase</keyword>
<keyword id="KW-0501">Molybdenum cofactor biosynthesis</keyword>
<dbReference type="EC" id="4.6.1.17" evidence="1"/>
<dbReference type="EMBL" id="CP001139">
    <property type="protein sequence ID" value="ACH65240.1"/>
    <property type="molecule type" value="Genomic_DNA"/>
</dbReference>
<dbReference type="RefSeq" id="WP_005418586.1">
    <property type="nucleotide sequence ID" value="NC_011184.1"/>
</dbReference>
<dbReference type="SMR" id="B5FCP1"/>
<dbReference type="GeneID" id="54163611"/>
<dbReference type="KEGG" id="vfm:VFMJ11_0982"/>
<dbReference type="HOGENOM" id="CLU_074693_1_1_6"/>
<dbReference type="UniPathway" id="UPA00344"/>
<dbReference type="Proteomes" id="UP000001857">
    <property type="component" value="Chromosome I"/>
</dbReference>
<dbReference type="GO" id="GO:0061799">
    <property type="term" value="F:cyclic pyranopterin monophosphate synthase activity"/>
    <property type="evidence" value="ECO:0007669"/>
    <property type="project" value="UniProtKB-UniRule"/>
</dbReference>
<dbReference type="GO" id="GO:0061798">
    <property type="term" value="F:GTP 3',8'-cyclase activity"/>
    <property type="evidence" value="ECO:0007669"/>
    <property type="project" value="TreeGrafter"/>
</dbReference>
<dbReference type="GO" id="GO:0006777">
    <property type="term" value="P:Mo-molybdopterin cofactor biosynthetic process"/>
    <property type="evidence" value="ECO:0007669"/>
    <property type="project" value="UniProtKB-UniRule"/>
</dbReference>
<dbReference type="CDD" id="cd01420">
    <property type="entry name" value="MoaC_PE"/>
    <property type="match status" value="1"/>
</dbReference>
<dbReference type="FunFam" id="3.30.70.640:FF:000001">
    <property type="entry name" value="Cyclic pyranopterin monophosphate synthase"/>
    <property type="match status" value="1"/>
</dbReference>
<dbReference type="Gene3D" id="3.30.70.640">
    <property type="entry name" value="Molybdopterin cofactor biosynthesis C (MoaC) domain"/>
    <property type="match status" value="1"/>
</dbReference>
<dbReference type="HAMAP" id="MF_01224_B">
    <property type="entry name" value="MoaC_B"/>
    <property type="match status" value="1"/>
</dbReference>
<dbReference type="InterPro" id="IPR023045">
    <property type="entry name" value="MoaC"/>
</dbReference>
<dbReference type="InterPro" id="IPR047594">
    <property type="entry name" value="MoaC_bact/euk"/>
</dbReference>
<dbReference type="InterPro" id="IPR036522">
    <property type="entry name" value="MoaC_sf"/>
</dbReference>
<dbReference type="InterPro" id="IPR050105">
    <property type="entry name" value="MoCo_biosynth_MoaA/MoaC"/>
</dbReference>
<dbReference type="InterPro" id="IPR002820">
    <property type="entry name" value="Mopterin_CF_biosynth-C_dom"/>
</dbReference>
<dbReference type="NCBIfam" id="TIGR00581">
    <property type="entry name" value="moaC"/>
    <property type="match status" value="1"/>
</dbReference>
<dbReference type="NCBIfam" id="NF006870">
    <property type="entry name" value="PRK09364.1"/>
    <property type="match status" value="1"/>
</dbReference>
<dbReference type="PANTHER" id="PTHR22960:SF0">
    <property type="entry name" value="MOLYBDENUM COFACTOR BIOSYNTHESIS PROTEIN 1"/>
    <property type="match status" value="1"/>
</dbReference>
<dbReference type="PANTHER" id="PTHR22960">
    <property type="entry name" value="MOLYBDOPTERIN COFACTOR SYNTHESIS PROTEIN A"/>
    <property type="match status" value="1"/>
</dbReference>
<dbReference type="Pfam" id="PF01967">
    <property type="entry name" value="MoaC"/>
    <property type="match status" value="1"/>
</dbReference>
<dbReference type="SUPFAM" id="SSF55040">
    <property type="entry name" value="Molybdenum cofactor biosynthesis protein C, MoaC"/>
    <property type="match status" value="1"/>
</dbReference>
<name>MOAC_ALIFM</name>
<accession>B5FCP1</accession>
<feature type="chain" id="PRO_1000139305" description="Cyclic pyranopterin monophosphate synthase">
    <location>
        <begin position="1"/>
        <end position="159"/>
    </location>
</feature>
<feature type="active site" evidence="1">
    <location>
        <position position="128"/>
    </location>
</feature>
<feature type="binding site" evidence="1">
    <location>
        <begin position="75"/>
        <end position="77"/>
    </location>
    <ligand>
        <name>substrate</name>
    </ligand>
</feature>
<feature type="binding site" evidence="1">
    <location>
        <begin position="113"/>
        <end position="114"/>
    </location>
    <ligand>
        <name>substrate</name>
    </ligand>
</feature>
<organism>
    <name type="scientific">Aliivibrio fischeri (strain MJ11)</name>
    <name type="common">Vibrio fischeri</name>
    <dbReference type="NCBI Taxonomy" id="388396"/>
    <lineage>
        <taxon>Bacteria</taxon>
        <taxon>Pseudomonadati</taxon>
        <taxon>Pseudomonadota</taxon>
        <taxon>Gammaproteobacteria</taxon>
        <taxon>Vibrionales</taxon>
        <taxon>Vibrionaceae</taxon>
        <taxon>Aliivibrio</taxon>
    </lineage>
</organism>
<evidence type="ECO:0000255" key="1">
    <source>
        <dbReference type="HAMAP-Rule" id="MF_01224"/>
    </source>
</evidence>
<sequence>MSNFTHINASGEANMVDVSAKQETVREARAEAFVHMAPETLELIVSGSHHKGDVFATARIAGIQAAKKTWDLIPLCHPLLLSKVEVQLEAIEAENMVRIESVCKLAGKTGVEMEALTAASVAALTIYDMCKAVQKDMVIGQVRLLEKTGGKSGHFKADA</sequence>
<reference key="1">
    <citation type="submission" date="2008-08" db="EMBL/GenBank/DDBJ databases">
        <title>Complete sequence of Vibrio fischeri strain MJ11.</title>
        <authorList>
            <person name="Mandel M.J."/>
            <person name="Stabb E.V."/>
            <person name="Ruby E.G."/>
            <person name="Ferriera S."/>
            <person name="Johnson J."/>
            <person name="Kravitz S."/>
            <person name="Beeson K."/>
            <person name="Sutton G."/>
            <person name="Rogers Y.-H."/>
            <person name="Friedman R."/>
            <person name="Frazier M."/>
            <person name="Venter J.C."/>
        </authorList>
    </citation>
    <scope>NUCLEOTIDE SEQUENCE [LARGE SCALE GENOMIC DNA]</scope>
    <source>
        <strain>MJ11</strain>
    </source>
</reference>
<proteinExistence type="inferred from homology"/>
<protein>
    <recommendedName>
        <fullName evidence="1">Cyclic pyranopterin monophosphate synthase</fullName>
        <ecNumber evidence="1">4.6.1.17</ecNumber>
    </recommendedName>
    <alternativeName>
        <fullName evidence="1">Molybdenum cofactor biosynthesis protein C</fullName>
    </alternativeName>
</protein>
<comment type="function">
    <text evidence="1">Catalyzes the conversion of (8S)-3',8-cyclo-7,8-dihydroguanosine 5'-triphosphate to cyclic pyranopterin monophosphate (cPMP).</text>
</comment>
<comment type="catalytic activity">
    <reaction evidence="1">
        <text>(8S)-3',8-cyclo-7,8-dihydroguanosine 5'-triphosphate = cyclic pyranopterin phosphate + diphosphate</text>
        <dbReference type="Rhea" id="RHEA:49580"/>
        <dbReference type="ChEBI" id="CHEBI:33019"/>
        <dbReference type="ChEBI" id="CHEBI:59648"/>
        <dbReference type="ChEBI" id="CHEBI:131766"/>
        <dbReference type="EC" id="4.6.1.17"/>
    </reaction>
</comment>
<comment type="pathway">
    <text evidence="1">Cofactor biosynthesis; molybdopterin biosynthesis.</text>
</comment>
<comment type="subunit">
    <text evidence="1">Homohexamer; trimer of dimers.</text>
</comment>
<comment type="similarity">
    <text evidence="1">Belongs to the MoaC family.</text>
</comment>
<gene>
    <name evidence="1" type="primary">moaC</name>
    <name type="ordered locus">VFMJ11_0982</name>
</gene>